<gene>
    <name evidence="1" type="primary">atpB</name>
</gene>
<dbReference type="EC" id="7.1.2.2" evidence="1"/>
<dbReference type="EMBL" id="DQ231562">
    <property type="protein sequence ID" value="ABB90048.1"/>
    <property type="molecule type" value="Genomic_DNA"/>
</dbReference>
<dbReference type="EMBL" id="DQ386163">
    <property type="protein sequence ID" value="ABD47064.1"/>
    <property type="molecule type" value="Genomic_DNA"/>
</dbReference>
<dbReference type="RefSeq" id="YP_635646.1">
    <property type="nucleotide sequence ID" value="NC_008096.2"/>
</dbReference>
<dbReference type="SMR" id="Q2VEH0"/>
<dbReference type="FunCoup" id="Q2VEH0">
    <property type="interactions" value="354"/>
</dbReference>
<dbReference type="STRING" id="4113.Q2VEH0"/>
<dbReference type="PaxDb" id="4113-PGSC0003DMT400002642"/>
<dbReference type="GeneID" id="4099984"/>
<dbReference type="KEGG" id="sot:4099984"/>
<dbReference type="eggNOG" id="KOG1350">
    <property type="taxonomic scope" value="Eukaryota"/>
</dbReference>
<dbReference type="eggNOG" id="KOG1758">
    <property type="taxonomic scope" value="Eukaryota"/>
</dbReference>
<dbReference type="InParanoid" id="Q2VEH0"/>
<dbReference type="OrthoDB" id="1257362at2759"/>
<dbReference type="Proteomes" id="UP000011115">
    <property type="component" value="Unassembled WGS sequence"/>
</dbReference>
<dbReference type="ExpressionAtlas" id="Q2VEH0">
    <property type="expression patterns" value="baseline"/>
</dbReference>
<dbReference type="GO" id="GO:0009535">
    <property type="term" value="C:chloroplast thylakoid membrane"/>
    <property type="evidence" value="ECO:0007669"/>
    <property type="project" value="UniProtKB-SubCell"/>
</dbReference>
<dbReference type="GO" id="GO:0005739">
    <property type="term" value="C:mitochondrion"/>
    <property type="evidence" value="ECO:0007669"/>
    <property type="project" value="GOC"/>
</dbReference>
<dbReference type="GO" id="GO:0045259">
    <property type="term" value="C:proton-transporting ATP synthase complex"/>
    <property type="evidence" value="ECO:0007669"/>
    <property type="project" value="UniProtKB-KW"/>
</dbReference>
<dbReference type="GO" id="GO:0005524">
    <property type="term" value="F:ATP binding"/>
    <property type="evidence" value="ECO:0007669"/>
    <property type="project" value="UniProtKB-UniRule"/>
</dbReference>
<dbReference type="GO" id="GO:0016887">
    <property type="term" value="F:ATP hydrolysis activity"/>
    <property type="evidence" value="ECO:0007669"/>
    <property type="project" value="InterPro"/>
</dbReference>
<dbReference type="GO" id="GO:0046933">
    <property type="term" value="F:proton-transporting ATP synthase activity, rotational mechanism"/>
    <property type="evidence" value="ECO:0007669"/>
    <property type="project" value="UniProtKB-UniRule"/>
</dbReference>
<dbReference type="GO" id="GO:0042776">
    <property type="term" value="P:proton motive force-driven mitochondrial ATP synthesis"/>
    <property type="evidence" value="ECO:0000318"/>
    <property type="project" value="GO_Central"/>
</dbReference>
<dbReference type="CDD" id="cd18110">
    <property type="entry name" value="ATP-synt_F1_beta_C"/>
    <property type="match status" value="1"/>
</dbReference>
<dbReference type="CDD" id="cd18115">
    <property type="entry name" value="ATP-synt_F1_beta_N"/>
    <property type="match status" value="1"/>
</dbReference>
<dbReference type="CDD" id="cd01133">
    <property type="entry name" value="F1-ATPase_beta_CD"/>
    <property type="match status" value="1"/>
</dbReference>
<dbReference type="FunFam" id="1.10.1140.10:FF:000001">
    <property type="entry name" value="ATP synthase subunit beta"/>
    <property type="match status" value="1"/>
</dbReference>
<dbReference type="FunFam" id="3.40.50.300:FF:000026">
    <property type="entry name" value="ATP synthase subunit beta"/>
    <property type="match status" value="1"/>
</dbReference>
<dbReference type="FunFam" id="2.40.10.170:FF:000002">
    <property type="entry name" value="ATP synthase subunit beta, chloroplastic"/>
    <property type="match status" value="1"/>
</dbReference>
<dbReference type="Gene3D" id="2.40.10.170">
    <property type="match status" value="1"/>
</dbReference>
<dbReference type="Gene3D" id="1.10.1140.10">
    <property type="entry name" value="Bovine Mitochondrial F1-atpase, Atp Synthase Beta Chain, Chain D, domain 3"/>
    <property type="match status" value="1"/>
</dbReference>
<dbReference type="Gene3D" id="3.40.50.300">
    <property type="entry name" value="P-loop containing nucleotide triphosphate hydrolases"/>
    <property type="match status" value="1"/>
</dbReference>
<dbReference type="HAMAP" id="MF_01347">
    <property type="entry name" value="ATP_synth_beta_bact"/>
    <property type="match status" value="1"/>
</dbReference>
<dbReference type="InterPro" id="IPR003593">
    <property type="entry name" value="AAA+_ATPase"/>
</dbReference>
<dbReference type="InterPro" id="IPR055190">
    <property type="entry name" value="ATP-synt_VA_C"/>
</dbReference>
<dbReference type="InterPro" id="IPR005722">
    <property type="entry name" value="ATP_synth_F1_bsu"/>
</dbReference>
<dbReference type="InterPro" id="IPR020003">
    <property type="entry name" value="ATPase_a/bsu_AS"/>
</dbReference>
<dbReference type="InterPro" id="IPR050053">
    <property type="entry name" value="ATPase_alpha/beta_chains"/>
</dbReference>
<dbReference type="InterPro" id="IPR004100">
    <property type="entry name" value="ATPase_F1/V1/A1_a/bsu_N"/>
</dbReference>
<dbReference type="InterPro" id="IPR036121">
    <property type="entry name" value="ATPase_F1/V1/A1_a/bsu_N_sf"/>
</dbReference>
<dbReference type="InterPro" id="IPR000194">
    <property type="entry name" value="ATPase_F1/V1/A1_a/bsu_nucl-bd"/>
</dbReference>
<dbReference type="InterPro" id="IPR024034">
    <property type="entry name" value="ATPase_F1/V1_b/a_C"/>
</dbReference>
<dbReference type="InterPro" id="IPR027417">
    <property type="entry name" value="P-loop_NTPase"/>
</dbReference>
<dbReference type="NCBIfam" id="TIGR01039">
    <property type="entry name" value="atpD"/>
    <property type="match status" value="1"/>
</dbReference>
<dbReference type="PANTHER" id="PTHR15184">
    <property type="entry name" value="ATP SYNTHASE"/>
    <property type="match status" value="1"/>
</dbReference>
<dbReference type="PANTHER" id="PTHR15184:SF71">
    <property type="entry name" value="ATP SYNTHASE SUBUNIT BETA, MITOCHONDRIAL"/>
    <property type="match status" value="1"/>
</dbReference>
<dbReference type="Pfam" id="PF00006">
    <property type="entry name" value="ATP-synt_ab"/>
    <property type="match status" value="1"/>
</dbReference>
<dbReference type="Pfam" id="PF02874">
    <property type="entry name" value="ATP-synt_ab_N"/>
    <property type="match status" value="1"/>
</dbReference>
<dbReference type="Pfam" id="PF22919">
    <property type="entry name" value="ATP-synt_VA_C"/>
    <property type="match status" value="1"/>
</dbReference>
<dbReference type="SMART" id="SM00382">
    <property type="entry name" value="AAA"/>
    <property type="match status" value="1"/>
</dbReference>
<dbReference type="SUPFAM" id="SSF47917">
    <property type="entry name" value="C-terminal domain of alpha and beta subunits of F1 ATP synthase"/>
    <property type="match status" value="1"/>
</dbReference>
<dbReference type="SUPFAM" id="SSF50615">
    <property type="entry name" value="N-terminal domain of alpha and beta subunits of F1 ATP synthase"/>
    <property type="match status" value="1"/>
</dbReference>
<dbReference type="SUPFAM" id="SSF52540">
    <property type="entry name" value="P-loop containing nucleoside triphosphate hydrolases"/>
    <property type="match status" value="1"/>
</dbReference>
<dbReference type="PROSITE" id="PS00152">
    <property type="entry name" value="ATPASE_ALPHA_BETA"/>
    <property type="match status" value="1"/>
</dbReference>
<name>ATPB_SOLTU</name>
<sequence>MRINPTTSGSGVSTLEKKNPGRVVQIIGPVLDVAFPPGKMPNIYNALVVQGRDSVGQPINVACEVQQLLGNNRVRAVAMSATDGLTRGMAVIDTGAPIRVPVGGATLGRIFNVLGEPVDNLGPVDTSTTSPIHRSAPAFIQLDTKLSIFETGIKVVDLLAPYRRGGKIGLFGGAGVGKTVLIMELINNIAKAHGGVSVFGGVGERTREGNDLYMEMKESGVINKENIAESKVALVYGQMNEPPGARMRVGLTALTMAEYFRDVNEQDVLLFIDNIFRFVQAGSEVSALLGRMPSAVGYQPTLSTEMGSLQERITSTKDGSITSIQAVYVPADDLTDPAPATTFAHLDATTVLSRGLAAKGIYPAVDPLDSTSTMLQPRIVGEEHYETAQRVKQTLQRYKELQDIIAILGLDELSEEDRLLVARARKIERFLSQPFFVAEVFTGSPGKYVGLAETIRGFQLILSGELDGLPEQAFYLVGTIDEATAKAMNLEMESNLKK</sequence>
<evidence type="ECO:0000255" key="1">
    <source>
        <dbReference type="HAMAP-Rule" id="MF_01347"/>
    </source>
</evidence>
<accession>Q2VEH0</accession>
<protein>
    <recommendedName>
        <fullName evidence="1">ATP synthase subunit beta, chloroplastic</fullName>
        <ecNumber evidence="1">7.1.2.2</ecNumber>
    </recommendedName>
    <alternativeName>
        <fullName evidence="1">ATP synthase F1 sector subunit beta</fullName>
    </alternativeName>
    <alternativeName>
        <fullName evidence="1">F-ATPase subunit beta</fullName>
    </alternativeName>
</protein>
<geneLocation type="chloroplast"/>
<proteinExistence type="inferred from homology"/>
<keyword id="KW-0066">ATP synthesis</keyword>
<keyword id="KW-0067">ATP-binding</keyword>
<keyword id="KW-0139">CF(1)</keyword>
<keyword id="KW-0150">Chloroplast</keyword>
<keyword id="KW-0375">Hydrogen ion transport</keyword>
<keyword id="KW-0406">Ion transport</keyword>
<keyword id="KW-0472">Membrane</keyword>
<keyword id="KW-0547">Nucleotide-binding</keyword>
<keyword id="KW-0934">Plastid</keyword>
<keyword id="KW-1185">Reference proteome</keyword>
<keyword id="KW-0793">Thylakoid</keyword>
<keyword id="KW-1278">Translocase</keyword>
<keyword id="KW-0813">Transport</keyword>
<reference key="1">
    <citation type="journal article" date="2006" name="Plant Cell Rep.">
        <title>The complete chloroplast genome sequences of Solanum tuberosum and comparative analysis with Solanaceae species identified the presence of a 241-bp deletion in cultivated potato chloroplast DNA sequence.</title>
        <authorList>
            <person name="Chung H.-J."/>
            <person name="Jung J.D."/>
            <person name="Park H.-W."/>
            <person name="Kim J.-H."/>
            <person name="Cha H.W."/>
            <person name="Min S.R."/>
            <person name="Jeong W.-J."/>
            <person name="Liu J.R."/>
        </authorList>
    </citation>
    <scope>NUCLEOTIDE SEQUENCE [LARGE SCALE GENOMIC DNA]</scope>
    <source>
        <strain>cv. Desiree</strain>
    </source>
</reference>
<reference key="2">
    <citation type="submission" date="2006-02" db="EMBL/GenBank/DDBJ databases">
        <title>Complete chloroplast genome sequences of Solanum tuberosum cultivar Desiree and comparative analyses with other Solanaceae genomes.</title>
        <authorList>
            <person name="Gargano D."/>
            <person name="Scotti N."/>
            <person name="Vezzi A."/>
            <person name="Bilardi A."/>
            <person name="Valle G."/>
            <person name="Grillo S."/>
            <person name="Cardi T."/>
        </authorList>
    </citation>
    <scope>NUCLEOTIDE SEQUENCE [LARGE SCALE GENOMIC DNA]</scope>
    <source>
        <strain>cv. Desiree</strain>
    </source>
</reference>
<comment type="function">
    <text evidence="1">Produces ATP from ADP in the presence of a proton gradient across the membrane. The catalytic sites are hosted primarily by the beta subunits.</text>
</comment>
<comment type="catalytic activity">
    <reaction evidence="1">
        <text>ATP + H2O + 4 H(+)(in) = ADP + phosphate + 5 H(+)(out)</text>
        <dbReference type="Rhea" id="RHEA:57720"/>
        <dbReference type="ChEBI" id="CHEBI:15377"/>
        <dbReference type="ChEBI" id="CHEBI:15378"/>
        <dbReference type="ChEBI" id="CHEBI:30616"/>
        <dbReference type="ChEBI" id="CHEBI:43474"/>
        <dbReference type="ChEBI" id="CHEBI:456216"/>
        <dbReference type="EC" id="7.1.2.2"/>
    </reaction>
</comment>
<comment type="subunit">
    <text evidence="1">F-type ATPases have 2 components, CF(1) - the catalytic core - and CF(0) - the membrane proton channel. CF(1) has five subunits: alpha(3), beta(3), gamma(1), delta(1), epsilon(1). CF(0) has four main subunits: a(1), b(1), b'(1) and c(9-12).</text>
</comment>
<comment type="subcellular location">
    <subcellularLocation>
        <location evidence="1">Plastid</location>
        <location evidence="1">Chloroplast thylakoid membrane</location>
        <topology evidence="1">Peripheral membrane protein</topology>
    </subcellularLocation>
</comment>
<comment type="similarity">
    <text evidence="1">Belongs to the ATPase alpha/beta chains family.</text>
</comment>
<feature type="chain" id="PRO_0000254526" description="ATP synthase subunit beta, chloroplastic">
    <location>
        <begin position="1"/>
        <end position="498"/>
    </location>
</feature>
<feature type="binding site" evidence="1">
    <location>
        <begin position="172"/>
        <end position="179"/>
    </location>
    <ligand>
        <name>ATP</name>
        <dbReference type="ChEBI" id="CHEBI:30616"/>
    </ligand>
</feature>
<organism>
    <name type="scientific">Solanum tuberosum</name>
    <name type="common">Potato</name>
    <dbReference type="NCBI Taxonomy" id="4113"/>
    <lineage>
        <taxon>Eukaryota</taxon>
        <taxon>Viridiplantae</taxon>
        <taxon>Streptophyta</taxon>
        <taxon>Embryophyta</taxon>
        <taxon>Tracheophyta</taxon>
        <taxon>Spermatophyta</taxon>
        <taxon>Magnoliopsida</taxon>
        <taxon>eudicotyledons</taxon>
        <taxon>Gunneridae</taxon>
        <taxon>Pentapetalae</taxon>
        <taxon>asterids</taxon>
        <taxon>lamiids</taxon>
        <taxon>Solanales</taxon>
        <taxon>Solanaceae</taxon>
        <taxon>Solanoideae</taxon>
        <taxon>Solaneae</taxon>
        <taxon>Solanum</taxon>
    </lineage>
</organism>